<name>TYPH_SALTY</name>
<reference key="1">
    <citation type="journal article" date="2001" name="Nature">
        <title>Complete genome sequence of Salmonella enterica serovar Typhimurium LT2.</title>
        <authorList>
            <person name="McClelland M."/>
            <person name="Sanderson K.E."/>
            <person name="Spieth J."/>
            <person name="Clifton S.W."/>
            <person name="Latreille P."/>
            <person name="Courtney L."/>
            <person name="Porwollik S."/>
            <person name="Ali J."/>
            <person name="Dante M."/>
            <person name="Du F."/>
            <person name="Hou S."/>
            <person name="Layman D."/>
            <person name="Leonard S."/>
            <person name="Nguyen C."/>
            <person name="Scott K."/>
            <person name="Holmes A."/>
            <person name="Grewal N."/>
            <person name="Mulvaney E."/>
            <person name="Ryan E."/>
            <person name="Sun H."/>
            <person name="Florea L."/>
            <person name="Miller W."/>
            <person name="Stoneking T."/>
            <person name="Nhan M."/>
            <person name="Waterston R."/>
            <person name="Wilson R.K."/>
        </authorList>
    </citation>
    <scope>NUCLEOTIDE SEQUENCE [LARGE SCALE GENOMIC DNA]</scope>
    <source>
        <strain>LT2 / SGSC1412 / ATCC 700720</strain>
    </source>
</reference>
<organism>
    <name type="scientific">Salmonella typhimurium (strain LT2 / SGSC1412 / ATCC 700720)</name>
    <dbReference type="NCBI Taxonomy" id="99287"/>
    <lineage>
        <taxon>Bacteria</taxon>
        <taxon>Pseudomonadati</taxon>
        <taxon>Pseudomonadota</taxon>
        <taxon>Gammaproteobacteria</taxon>
        <taxon>Enterobacterales</taxon>
        <taxon>Enterobacteriaceae</taxon>
        <taxon>Salmonella</taxon>
    </lineage>
</organism>
<gene>
    <name evidence="1" type="primary">deoA</name>
    <name type="ordered locus">STM4568</name>
</gene>
<dbReference type="EC" id="2.4.2.4" evidence="1"/>
<dbReference type="EMBL" id="AE006468">
    <property type="protein sequence ID" value="AAL23383.1"/>
    <property type="molecule type" value="Genomic_DNA"/>
</dbReference>
<dbReference type="RefSeq" id="NP_463424.1">
    <property type="nucleotide sequence ID" value="NC_003197.2"/>
</dbReference>
<dbReference type="RefSeq" id="WP_000477838.1">
    <property type="nucleotide sequence ID" value="NC_003197.2"/>
</dbReference>
<dbReference type="PDB" id="4X46">
    <property type="method" value="X-ray"/>
    <property type="resolution" value="2.20 A"/>
    <property type="chains" value="A/B=1-440"/>
</dbReference>
<dbReference type="PDB" id="4XR5">
    <property type="method" value="X-ray"/>
    <property type="resolution" value="2.05 A"/>
    <property type="chains" value="A/B=1-440"/>
</dbReference>
<dbReference type="PDB" id="4YEK">
    <property type="method" value="X-ray"/>
    <property type="resolution" value="2.55 A"/>
    <property type="chains" value="A/B=1-440"/>
</dbReference>
<dbReference type="PDB" id="4YYY">
    <property type="method" value="X-ray"/>
    <property type="resolution" value="2.43 A"/>
    <property type="chains" value="A/B=1-440"/>
</dbReference>
<dbReference type="PDB" id="5EY3">
    <property type="method" value="X-ray"/>
    <property type="resolution" value="1.91 A"/>
    <property type="chains" value="A/B=1-440"/>
</dbReference>
<dbReference type="PDBsum" id="4X46"/>
<dbReference type="PDBsum" id="4XR5"/>
<dbReference type="PDBsum" id="4YEK"/>
<dbReference type="PDBsum" id="4YYY"/>
<dbReference type="PDBsum" id="5EY3"/>
<dbReference type="SMR" id="Q7CP66"/>
<dbReference type="STRING" id="99287.STM4568"/>
<dbReference type="PaxDb" id="99287-STM4568"/>
<dbReference type="GeneID" id="1256094"/>
<dbReference type="KEGG" id="stm:STM4568"/>
<dbReference type="PATRIC" id="fig|99287.12.peg.4810"/>
<dbReference type="HOGENOM" id="CLU_025040_0_1_6"/>
<dbReference type="PhylomeDB" id="Q7CP66"/>
<dbReference type="BioCyc" id="SENT99287:STM4568-MONOMER"/>
<dbReference type="BRENDA" id="2.4.2.4">
    <property type="organism ID" value="5542"/>
</dbReference>
<dbReference type="UniPathway" id="UPA00578">
    <property type="reaction ID" value="UER00638"/>
</dbReference>
<dbReference type="EvolutionaryTrace" id="Q7CP66"/>
<dbReference type="Proteomes" id="UP000001014">
    <property type="component" value="Chromosome"/>
</dbReference>
<dbReference type="GO" id="GO:0005829">
    <property type="term" value="C:cytosol"/>
    <property type="evidence" value="ECO:0000318"/>
    <property type="project" value="GO_Central"/>
</dbReference>
<dbReference type="GO" id="GO:0004645">
    <property type="term" value="F:1,4-alpha-oligoglucan phosphorylase activity"/>
    <property type="evidence" value="ECO:0007669"/>
    <property type="project" value="InterPro"/>
</dbReference>
<dbReference type="GO" id="GO:0009032">
    <property type="term" value="F:thymidine phosphorylase activity"/>
    <property type="evidence" value="ECO:0000318"/>
    <property type="project" value="GO_Central"/>
</dbReference>
<dbReference type="GO" id="GO:0006206">
    <property type="term" value="P:pyrimidine nucleobase metabolic process"/>
    <property type="evidence" value="ECO:0007669"/>
    <property type="project" value="InterPro"/>
</dbReference>
<dbReference type="GO" id="GO:0046104">
    <property type="term" value="P:thymidine metabolic process"/>
    <property type="evidence" value="ECO:0007669"/>
    <property type="project" value="UniProtKB-UniRule"/>
</dbReference>
<dbReference type="FunFam" id="3.40.1030.10:FF:000001">
    <property type="entry name" value="Thymidine phosphorylase"/>
    <property type="match status" value="1"/>
</dbReference>
<dbReference type="FunFam" id="3.90.1170.30:FF:000001">
    <property type="entry name" value="Thymidine phosphorylase"/>
    <property type="match status" value="1"/>
</dbReference>
<dbReference type="Gene3D" id="3.40.1030.10">
    <property type="entry name" value="Nucleoside phosphorylase/phosphoribosyltransferase catalytic domain"/>
    <property type="match status" value="1"/>
</dbReference>
<dbReference type="Gene3D" id="3.90.1170.30">
    <property type="entry name" value="Pyrimidine nucleoside phosphorylase-like, C-terminal domain"/>
    <property type="match status" value="1"/>
</dbReference>
<dbReference type="Gene3D" id="1.20.970.10">
    <property type="entry name" value="Transferase, Pyrimidine Nucleoside Phosphorylase, Chain C"/>
    <property type="match status" value="1"/>
</dbReference>
<dbReference type="HAMAP" id="MF_01628">
    <property type="entry name" value="Thymid_phosp"/>
    <property type="match status" value="1"/>
</dbReference>
<dbReference type="InterPro" id="IPR000312">
    <property type="entry name" value="Glycosyl_Trfase_fam3"/>
</dbReference>
<dbReference type="InterPro" id="IPR017459">
    <property type="entry name" value="Glycosyl_Trfase_fam3_N_dom"/>
</dbReference>
<dbReference type="InterPro" id="IPR036320">
    <property type="entry name" value="Glycosyl_Trfase_fam3_N_dom_sf"/>
</dbReference>
<dbReference type="InterPro" id="IPR035902">
    <property type="entry name" value="Nuc_phospho_transferase"/>
</dbReference>
<dbReference type="InterPro" id="IPR036566">
    <property type="entry name" value="PYNP-like_C_sf"/>
</dbReference>
<dbReference type="InterPro" id="IPR013102">
    <property type="entry name" value="PYNP_C"/>
</dbReference>
<dbReference type="InterPro" id="IPR018090">
    <property type="entry name" value="Pyrmidine_PPas_bac/euk"/>
</dbReference>
<dbReference type="InterPro" id="IPR017872">
    <property type="entry name" value="Pyrmidine_PPase_CS"/>
</dbReference>
<dbReference type="InterPro" id="IPR000053">
    <property type="entry name" value="Thymidine/pyrmidine_PPase"/>
</dbReference>
<dbReference type="InterPro" id="IPR013465">
    <property type="entry name" value="Thymidine_Pase"/>
</dbReference>
<dbReference type="NCBIfam" id="NF004490">
    <property type="entry name" value="PRK05820.1"/>
    <property type="match status" value="1"/>
</dbReference>
<dbReference type="NCBIfam" id="TIGR02643">
    <property type="entry name" value="T_phosphoryl"/>
    <property type="match status" value="1"/>
</dbReference>
<dbReference type="NCBIfam" id="TIGR02644">
    <property type="entry name" value="Y_phosphoryl"/>
    <property type="match status" value="1"/>
</dbReference>
<dbReference type="PANTHER" id="PTHR10515">
    <property type="entry name" value="THYMIDINE PHOSPHORYLASE"/>
    <property type="match status" value="1"/>
</dbReference>
<dbReference type="PANTHER" id="PTHR10515:SF0">
    <property type="entry name" value="THYMIDINE PHOSPHORYLASE"/>
    <property type="match status" value="1"/>
</dbReference>
<dbReference type="Pfam" id="PF02885">
    <property type="entry name" value="Glycos_trans_3N"/>
    <property type="match status" value="1"/>
</dbReference>
<dbReference type="Pfam" id="PF00591">
    <property type="entry name" value="Glycos_transf_3"/>
    <property type="match status" value="1"/>
</dbReference>
<dbReference type="Pfam" id="PF07831">
    <property type="entry name" value="PYNP_C"/>
    <property type="match status" value="1"/>
</dbReference>
<dbReference type="PIRSF" id="PIRSF000478">
    <property type="entry name" value="TP_PyNP"/>
    <property type="match status" value="1"/>
</dbReference>
<dbReference type="SMART" id="SM00941">
    <property type="entry name" value="PYNP_C"/>
    <property type="match status" value="1"/>
</dbReference>
<dbReference type="SUPFAM" id="SSF52418">
    <property type="entry name" value="Nucleoside phosphorylase/phosphoribosyltransferase catalytic domain"/>
    <property type="match status" value="1"/>
</dbReference>
<dbReference type="SUPFAM" id="SSF47648">
    <property type="entry name" value="Nucleoside phosphorylase/phosphoribosyltransferase N-terminal domain"/>
    <property type="match status" value="1"/>
</dbReference>
<dbReference type="SUPFAM" id="SSF54680">
    <property type="entry name" value="Pyrimidine nucleoside phosphorylase C-terminal domain"/>
    <property type="match status" value="1"/>
</dbReference>
<dbReference type="PROSITE" id="PS00647">
    <property type="entry name" value="THYMID_PHOSPHORYLASE"/>
    <property type="match status" value="1"/>
</dbReference>
<feature type="chain" id="PRO_0000059064" description="Thymidine phosphorylase">
    <location>
        <begin position="1"/>
        <end position="440"/>
    </location>
</feature>
<feature type="helix" evidence="6">
    <location>
        <begin position="1"/>
        <end position="12"/>
    </location>
</feature>
<feature type="helix" evidence="6">
    <location>
        <begin position="19"/>
        <end position="30"/>
    </location>
</feature>
<feature type="helix" evidence="6">
    <location>
        <begin position="36"/>
        <end position="49"/>
    </location>
</feature>
<feature type="helix" evidence="6">
    <location>
        <begin position="53"/>
        <end position="65"/>
    </location>
</feature>
<feature type="helix" evidence="6">
    <location>
        <begin position="73"/>
        <end position="75"/>
    </location>
</feature>
<feature type="strand" evidence="6">
    <location>
        <begin position="81"/>
        <end position="86"/>
    </location>
</feature>
<feature type="helix" evidence="6">
    <location>
        <begin position="94"/>
        <end position="104"/>
    </location>
</feature>
<feature type="strand" evidence="6">
    <location>
        <begin position="108"/>
        <end position="112"/>
    </location>
</feature>
<feature type="strand" evidence="2">
    <location>
        <begin position="118"/>
        <end position="120"/>
    </location>
</feature>
<feature type="helix" evidence="6">
    <location>
        <begin position="123"/>
        <end position="127"/>
    </location>
</feature>
<feature type="helix" evidence="6">
    <location>
        <begin position="139"/>
        <end position="148"/>
    </location>
</feature>
<feature type="strand" evidence="6">
    <location>
        <begin position="150"/>
        <end position="154"/>
    </location>
</feature>
<feature type="helix" evidence="6">
    <location>
        <begin position="163"/>
        <end position="171"/>
    </location>
</feature>
<feature type="turn" evidence="6">
    <location>
        <begin position="172"/>
        <end position="175"/>
    </location>
</feature>
<feature type="helix" evidence="6">
    <location>
        <begin position="180"/>
        <end position="192"/>
    </location>
</feature>
<feature type="strand" evidence="6">
    <location>
        <begin position="197"/>
        <end position="206"/>
    </location>
</feature>
<feature type="strand" evidence="6">
    <location>
        <begin position="209"/>
        <end position="213"/>
    </location>
</feature>
<feature type="helix" evidence="6">
    <location>
        <begin position="214"/>
        <end position="230"/>
    </location>
</feature>
<feature type="strand" evidence="6">
    <location>
        <begin position="234"/>
        <end position="241"/>
    </location>
</feature>
<feature type="strand" evidence="6">
    <location>
        <begin position="246"/>
        <end position="248"/>
    </location>
</feature>
<feature type="strand" evidence="6">
    <location>
        <begin position="250"/>
        <end position="252"/>
    </location>
</feature>
<feature type="helix" evidence="6">
    <location>
        <begin position="253"/>
        <end position="264"/>
    </location>
</feature>
<feature type="helix" evidence="6">
    <location>
        <begin position="270"/>
        <end position="286"/>
    </location>
</feature>
<feature type="strand" evidence="4">
    <location>
        <begin position="289"/>
        <end position="292"/>
    </location>
</feature>
<feature type="helix" evidence="6">
    <location>
        <begin position="293"/>
        <end position="305"/>
    </location>
</feature>
<feature type="helix" evidence="6">
    <location>
        <begin position="308"/>
        <end position="319"/>
    </location>
</feature>
<feature type="helix" evidence="6">
    <location>
        <begin position="326"/>
        <end position="333"/>
    </location>
</feature>
<feature type="strand" evidence="6">
    <location>
        <begin position="338"/>
        <end position="343"/>
    </location>
</feature>
<feature type="strand" evidence="6">
    <location>
        <begin position="349"/>
        <end position="354"/>
    </location>
</feature>
<feature type="helix" evidence="6">
    <location>
        <begin position="356"/>
        <end position="365"/>
    </location>
</feature>
<feature type="turn" evidence="6">
    <location>
        <begin position="366"/>
        <end position="368"/>
    </location>
</feature>
<feature type="strand" evidence="3">
    <location>
        <begin position="371"/>
        <end position="374"/>
    </location>
</feature>
<feature type="strand" evidence="6">
    <location>
        <begin position="382"/>
        <end position="385"/>
    </location>
</feature>
<feature type="strand" evidence="6">
    <location>
        <begin position="392"/>
        <end position="394"/>
    </location>
</feature>
<feature type="strand" evidence="5">
    <location>
        <begin position="395"/>
        <end position="397"/>
    </location>
</feature>
<feature type="strand" evidence="6">
    <location>
        <begin position="399"/>
        <end position="406"/>
    </location>
</feature>
<feature type="helix" evidence="6">
    <location>
        <begin position="407"/>
        <end position="420"/>
    </location>
</feature>
<feature type="strand" evidence="6">
    <location>
        <begin position="421"/>
        <end position="426"/>
    </location>
</feature>
<feature type="strand" evidence="6">
    <location>
        <begin position="433"/>
        <end position="438"/>
    </location>
</feature>
<proteinExistence type="evidence at protein level"/>
<keyword id="KW-0002">3D-structure</keyword>
<keyword id="KW-0328">Glycosyltransferase</keyword>
<keyword id="KW-1185">Reference proteome</keyword>
<keyword id="KW-0808">Transferase</keyword>
<sequence length="440" mass="47002">MFLAQEIIRKKRDGHALSDEEIRFFINGIRDNTISEGQIAALAMTIFFHDMTMPERVSLTMAMRDSGTVLDWKSLNLNGPIVDKHSTGGVGDVTSLMLGPMVAACGGYVPMISGRGLGHTGGTLDKLEAIPGFDIFPDDNRFREIIQDVGVAIIGQTSSLAPADKRFYATRDITATVDSIPLITGSILAKKLAEGLDALVMDVKVGSGAFMPTYELSEALAEAIVGVANGAGVRTTALLTDMNQVLASSAGNAVEVREAVQFLTGEYRNPRLFDVTMALCVEMLISGQLAKDDAEARAKLQAVLDNGKAAEVFGRMVAAQKGPSDFVENYDKYLPTAMLSKAVYADTEGFISAMDTRALGMAVVSMGGGRRQASDTIDYSVGFTDMARLGDSIDGQRPLAVIHAKDEASWQEAAKAVKAAIILDDKAPASTPSVYRRITE</sequence>
<comment type="function">
    <text evidence="1">The enzymes which catalyze the reversible phosphorolysis of pyrimidine nucleosides are involved in the degradation of these compounds and in their utilization as carbon and energy sources, or in the rescue of pyrimidine bases for nucleotide synthesis.</text>
</comment>
<comment type="catalytic activity">
    <reaction evidence="1">
        <text>thymidine + phosphate = 2-deoxy-alpha-D-ribose 1-phosphate + thymine</text>
        <dbReference type="Rhea" id="RHEA:16037"/>
        <dbReference type="ChEBI" id="CHEBI:17748"/>
        <dbReference type="ChEBI" id="CHEBI:17821"/>
        <dbReference type="ChEBI" id="CHEBI:43474"/>
        <dbReference type="ChEBI" id="CHEBI:57259"/>
        <dbReference type="EC" id="2.4.2.4"/>
    </reaction>
</comment>
<comment type="pathway">
    <text evidence="1">Pyrimidine metabolism; dTMP biosynthesis via salvage pathway; dTMP from thymine: step 1/2.</text>
</comment>
<comment type="subunit">
    <text evidence="1">Homodimer.</text>
</comment>
<comment type="similarity">
    <text evidence="1">Belongs to the thymidine/pyrimidine-nucleoside phosphorylase family.</text>
</comment>
<protein>
    <recommendedName>
        <fullName evidence="1">Thymidine phosphorylase</fullName>
        <ecNumber evidence="1">2.4.2.4</ecNumber>
    </recommendedName>
    <alternativeName>
        <fullName evidence="1">TdRPase</fullName>
    </alternativeName>
</protein>
<evidence type="ECO:0000255" key="1">
    <source>
        <dbReference type="HAMAP-Rule" id="MF_01628"/>
    </source>
</evidence>
<evidence type="ECO:0007829" key="2">
    <source>
        <dbReference type="PDB" id="4X46"/>
    </source>
</evidence>
<evidence type="ECO:0007829" key="3">
    <source>
        <dbReference type="PDB" id="4XR5"/>
    </source>
</evidence>
<evidence type="ECO:0007829" key="4">
    <source>
        <dbReference type="PDB" id="4YEK"/>
    </source>
</evidence>
<evidence type="ECO:0007829" key="5">
    <source>
        <dbReference type="PDB" id="4YYY"/>
    </source>
</evidence>
<evidence type="ECO:0007829" key="6">
    <source>
        <dbReference type="PDB" id="5EY3"/>
    </source>
</evidence>
<accession>Q7CP66</accession>